<protein>
    <recommendedName>
        <fullName>Sorting nexin-4</fullName>
    </recommendedName>
    <alternativeName>
        <fullName>Autophagy-related protein 24</fullName>
    </alternativeName>
</protein>
<keyword id="KW-0072">Autophagy</keyword>
<keyword id="KW-0175">Coiled coil</keyword>
<keyword id="KW-0963">Cytoplasm</keyword>
<keyword id="KW-0967">Endosome</keyword>
<keyword id="KW-0446">Lipid-binding</keyword>
<keyword id="KW-0472">Membrane</keyword>
<keyword id="KW-0653">Protein transport</keyword>
<keyword id="KW-1185">Reference proteome</keyword>
<keyword id="KW-0813">Transport</keyword>
<comment type="function">
    <text evidence="1">Sorting nexin, involved in the separation or division of vacuoles throughout the entire life cycle of the cells. Involved in retrieval of late-Golgi SNAREs from post-Golgi endosomes to the trans-Golgi network, for cytoplasm to vacuole transport (Cvt), and autophagy of large cargos including mitophagy, pexophagy and glycophagy.</text>
</comment>
<comment type="subcellular location">
    <subcellularLocation>
        <location evidence="1">Cytoplasm</location>
        <location evidence="1">Cytosol</location>
    </subcellularLocation>
    <subcellularLocation>
        <location evidence="1">Preautophagosomal structure membrane</location>
        <topology evidence="1">Peripheral membrane protein</topology>
    </subcellularLocation>
    <subcellularLocation>
        <location evidence="1">Endosome membrane</location>
        <topology evidence="1">Peripheral membrane protein</topology>
    </subcellularLocation>
    <text evidence="1">Endosome and other perivacuolar punctate structures. Associates to phosphatidylinositol 3-phosphate, necessary for peripheral membrane localization to the perivacuolar punctate structures.</text>
</comment>
<comment type="domain">
    <text evidence="4">The PX domain binds phosphatidylinositol 3-phosphate which is necessary for peripheral membrane localization to the perivacuolar punctate structures.</text>
</comment>
<comment type="similarity">
    <text evidence="8">Belongs to the sorting nexin family.</text>
</comment>
<sequence>MDSASADASVTGSGNAKGSSAERVNGGGKFYKLEILVSDPQKRAGEAGLGPYVSYQISTRTDNPSYHGNQKASFDDIIVVHRRYNDVVLLHDILQNDHPTCIIPPLPDKKVLQYIAGDRFGRRFTQRRCHSLQNFLRRVSQHPILSTSKVLEIFLVGNEWDTYRKNIAGTLQNAQKEDVTDAVMNAFKKVHNQNEEFTEIRDRSDKLDNSVNRINKVFHRVVKKNEAIIEDYSKLGLTLQELQELVSSDNDKLADSLKVFIEGVTQFSYGLQDLNMFIDYEYLIDLKDLSHYIGSMKQTMRLKDQKQIDYEELSDYLTKSIKEKNNLISGYGGGNFLTSKLEELAGYNQEASRRDKINKLESTISSLTTELETAKKVADTFEQETLKEVKKFEEIKNDELKISLNNLADENIKFYERMLETWEKVDQSLR</sequence>
<dbReference type="EMBL" id="CR380956">
    <property type="protein sequence ID" value="CAG60702.1"/>
    <property type="molecule type" value="Genomic_DNA"/>
</dbReference>
<dbReference type="RefSeq" id="XP_447755.1">
    <property type="nucleotide sequence ID" value="XM_447755.1"/>
</dbReference>
<dbReference type="SMR" id="Q6FPT9"/>
<dbReference type="FunCoup" id="Q6FPT9">
    <property type="interactions" value="578"/>
</dbReference>
<dbReference type="STRING" id="284593.Q6FPT9"/>
<dbReference type="EnsemblFungi" id="CAGL0J01001g-T">
    <property type="protein sequence ID" value="CAGL0J01001g-T-p1"/>
    <property type="gene ID" value="CAGL0J01001g"/>
</dbReference>
<dbReference type="KEGG" id="cgr:2889847"/>
<dbReference type="CGD" id="CAL0133242">
    <property type="gene designation" value="CAGL0J01001g"/>
</dbReference>
<dbReference type="VEuPathDB" id="FungiDB:CAGL0J01001g"/>
<dbReference type="eggNOG" id="KOG2273">
    <property type="taxonomic scope" value="Eukaryota"/>
</dbReference>
<dbReference type="HOGENOM" id="CLU_027221_0_0_1"/>
<dbReference type="InParanoid" id="Q6FPT9"/>
<dbReference type="OMA" id="WSLHRFI"/>
<dbReference type="Proteomes" id="UP000002428">
    <property type="component" value="Chromosome J"/>
</dbReference>
<dbReference type="GO" id="GO:0010009">
    <property type="term" value="C:cytoplasmic side of endosome membrane"/>
    <property type="evidence" value="ECO:0007669"/>
    <property type="project" value="EnsemblFungi"/>
</dbReference>
<dbReference type="GO" id="GO:0005829">
    <property type="term" value="C:cytosol"/>
    <property type="evidence" value="ECO:0007669"/>
    <property type="project" value="UniProtKB-SubCell"/>
</dbReference>
<dbReference type="GO" id="GO:0005769">
    <property type="term" value="C:early endosome"/>
    <property type="evidence" value="ECO:0007669"/>
    <property type="project" value="EnsemblFungi"/>
</dbReference>
<dbReference type="GO" id="GO:0048471">
    <property type="term" value="C:perinuclear region of cytoplasm"/>
    <property type="evidence" value="ECO:0007669"/>
    <property type="project" value="EnsemblFungi"/>
</dbReference>
<dbReference type="GO" id="GO:0034045">
    <property type="term" value="C:phagophore assembly site membrane"/>
    <property type="evidence" value="ECO:0007669"/>
    <property type="project" value="UniProtKB-SubCell"/>
</dbReference>
<dbReference type="GO" id="GO:0032266">
    <property type="term" value="F:phosphatidylinositol-3-phosphate binding"/>
    <property type="evidence" value="ECO:0007669"/>
    <property type="project" value="EnsemblFungi"/>
</dbReference>
<dbReference type="GO" id="GO:0000422">
    <property type="term" value="P:autophagy of mitochondrion"/>
    <property type="evidence" value="ECO:0007669"/>
    <property type="project" value="EnsemblFungi"/>
</dbReference>
<dbReference type="GO" id="GO:0032258">
    <property type="term" value="P:cytoplasm to vacuole targeting by the Cvt pathway"/>
    <property type="evidence" value="ECO:0007669"/>
    <property type="project" value="EnsemblFungi"/>
</dbReference>
<dbReference type="GO" id="GO:0034498">
    <property type="term" value="P:early endosome to Golgi transport"/>
    <property type="evidence" value="ECO:0007669"/>
    <property type="project" value="EnsemblFungi"/>
</dbReference>
<dbReference type="GO" id="GO:0032456">
    <property type="term" value="P:endocytic recycling"/>
    <property type="evidence" value="ECO:0007669"/>
    <property type="project" value="EnsemblFungi"/>
</dbReference>
<dbReference type="GO" id="GO:0061723">
    <property type="term" value="P:glycophagy"/>
    <property type="evidence" value="ECO:0007669"/>
    <property type="project" value="EnsemblFungi"/>
</dbReference>
<dbReference type="GO" id="GO:0034727">
    <property type="term" value="P:piecemeal microautophagy of the nucleus"/>
    <property type="evidence" value="ECO:0007669"/>
    <property type="project" value="EnsemblFungi"/>
</dbReference>
<dbReference type="GO" id="GO:0036010">
    <property type="term" value="P:protein localization to endosome"/>
    <property type="evidence" value="ECO:0007669"/>
    <property type="project" value="EnsemblFungi"/>
</dbReference>
<dbReference type="GO" id="GO:0061709">
    <property type="term" value="P:reticulophagy"/>
    <property type="evidence" value="ECO:0007669"/>
    <property type="project" value="TreeGrafter"/>
</dbReference>
<dbReference type="CDD" id="cd06863">
    <property type="entry name" value="PX_Atg24p"/>
    <property type="match status" value="1"/>
</dbReference>
<dbReference type="Gene3D" id="1.20.1270.60">
    <property type="entry name" value="Arfaptin homology (AH) domain/BAR domain"/>
    <property type="match status" value="1"/>
</dbReference>
<dbReference type="Gene3D" id="3.30.1520.10">
    <property type="entry name" value="Phox-like domain"/>
    <property type="match status" value="1"/>
</dbReference>
<dbReference type="InterPro" id="IPR027267">
    <property type="entry name" value="AH/BAR_dom_sf"/>
</dbReference>
<dbReference type="InterPro" id="IPR001683">
    <property type="entry name" value="PX_dom"/>
</dbReference>
<dbReference type="InterPro" id="IPR036871">
    <property type="entry name" value="PX_dom_sf"/>
</dbReference>
<dbReference type="PANTHER" id="PTHR45949">
    <property type="entry name" value="SORTING NEXIN-4"/>
    <property type="match status" value="1"/>
</dbReference>
<dbReference type="PANTHER" id="PTHR45949:SF2">
    <property type="entry name" value="SORTING NEXIN-4"/>
    <property type="match status" value="1"/>
</dbReference>
<dbReference type="Pfam" id="PF00787">
    <property type="entry name" value="PX"/>
    <property type="match status" value="1"/>
</dbReference>
<dbReference type="SMART" id="SM00312">
    <property type="entry name" value="PX"/>
    <property type="match status" value="1"/>
</dbReference>
<dbReference type="SUPFAM" id="SSF103657">
    <property type="entry name" value="BAR/IMD domain-like"/>
    <property type="match status" value="1"/>
</dbReference>
<dbReference type="SUPFAM" id="SSF64268">
    <property type="entry name" value="PX domain"/>
    <property type="match status" value="1"/>
</dbReference>
<dbReference type="PROSITE" id="PS50195">
    <property type="entry name" value="PX"/>
    <property type="match status" value="1"/>
</dbReference>
<accession>Q6FPT9</accession>
<evidence type="ECO:0000250" key="1">
    <source>
        <dbReference type="UniProtKB" id="P47057"/>
    </source>
</evidence>
<evidence type="ECO:0000250" key="2">
    <source>
        <dbReference type="UniProtKB" id="Q3UR97"/>
    </source>
</evidence>
<evidence type="ECO:0000250" key="3">
    <source>
        <dbReference type="UniProtKB" id="Q6P4T1"/>
    </source>
</evidence>
<evidence type="ECO:0000250" key="4">
    <source>
        <dbReference type="UniProtKB" id="Q96L94"/>
    </source>
</evidence>
<evidence type="ECO:0000255" key="5"/>
<evidence type="ECO:0000255" key="6">
    <source>
        <dbReference type="PROSITE-ProRule" id="PRU00147"/>
    </source>
</evidence>
<evidence type="ECO:0000256" key="7">
    <source>
        <dbReference type="SAM" id="MobiDB-lite"/>
    </source>
</evidence>
<evidence type="ECO:0000305" key="8"/>
<gene>
    <name type="primary">SNX4</name>
    <name type="synonym">ATG24</name>
    <name type="ordered locus">CAGL0J01001g</name>
</gene>
<feature type="chain" id="PRO_0000213809" description="Sorting nexin-4">
    <location>
        <begin position="1"/>
        <end position="430"/>
    </location>
</feature>
<feature type="domain" description="PX" evidence="6">
    <location>
        <begin position="33"/>
        <end position="162"/>
    </location>
</feature>
<feature type="region of interest" description="Disordered" evidence="7">
    <location>
        <begin position="1"/>
        <end position="22"/>
    </location>
</feature>
<feature type="coiled-coil region" evidence="5">
    <location>
        <begin position="351"/>
        <end position="414"/>
    </location>
</feature>
<feature type="compositionally biased region" description="Polar residues" evidence="7">
    <location>
        <begin position="1"/>
        <end position="18"/>
    </location>
</feature>
<feature type="binding site" evidence="2">
    <location>
        <position position="83"/>
    </location>
    <ligand>
        <name>a 1,2-diacyl-sn-glycero-3-phospho-(1D-myo-inositol-3-phosphate)</name>
        <dbReference type="ChEBI" id="CHEBI:58088"/>
    </ligand>
</feature>
<feature type="binding site" evidence="4">
    <location>
        <position position="109"/>
    </location>
    <ligand>
        <name>a 1,2-diacyl-sn-glycero-3-phospho-(1D-myo-inositol-3-phosphate)</name>
        <dbReference type="ChEBI" id="CHEBI:58088"/>
    </ligand>
</feature>
<feature type="binding site" evidence="3">
    <location>
        <position position="128"/>
    </location>
    <ligand>
        <name>a 1,2-diacyl-sn-glycero-3-phospho-(1D-myo-inositol-3-phosphate)</name>
        <dbReference type="ChEBI" id="CHEBI:58088"/>
    </ligand>
</feature>
<organism>
    <name type="scientific">Candida glabrata (strain ATCC 2001 / BCRC 20586 / JCM 3761 / NBRC 0622 / NRRL Y-65 / CBS 138)</name>
    <name type="common">Yeast</name>
    <name type="synonym">Nakaseomyces glabratus</name>
    <dbReference type="NCBI Taxonomy" id="284593"/>
    <lineage>
        <taxon>Eukaryota</taxon>
        <taxon>Fungi</taxon>
        <taxon>Dikarya</taxon>
        <taxon>Ascomycota</taxon>
        <taxon>Saccharomycotina</taxon>
        <taxon>Saccharomycetes</taxon>
        <taxon>Saccharomycetales</taxon>
        <taxon>Saccharomycetaceae</taxon>
        <taxon>Nakaseomyces</taxon>
    </lineage>
</organism>
<reference key="1">
    <citation type="journal article" date="2004" name="Nature">
        <title>Genome evolution in yeasts.</title>
        <authorList>
            <person name="Dujon B."/>
            <person name="Sherman D."/>
            <person name="Fischer G."/>
            <person name="Durrens P."/>
            <person name="Casaregola S."/>
            <person name="Lafontaine I."/>
            <person name="de Montigny J."/>
            <person name="Marck C."/>
            <person name="Neuveglise C."/>
            <person name="Talla E."/>
            <person name="Goffard N."/>
            <person name="Frangeul L."/>
            <person name="Aigle M."/>
            <person name="Anthouard V."/>
            <person name="Babour A."/>
            <person name="Barbe V."/>
            <person name="Barnay S."/>
            <person name="Blanchin S."/>
            <person name="Beckerich J.-M."/>
            <person name="Beyne E."/>
            <person name="Bleykasten C."/>
            <person name="Boisrame A."/>
            <person name="Boyer J."/>
            <person name="Cattolico L."/>
            <person name="Confanioleri F."/>
            <person name="de Daruvar A."/>
            <person name="Despons L."/>
            <person name="Fabre E."/>
            <person name="Fairhead C."/>
            <person name="Ferry-Dumazet H."/>
            <person name="Groppi A."/>
            <person name="Hantraye F."/>
            <person name="Hennequin C."/>
            <person name="Jauniaux N."/>
            <person name="Joyet P."/>
            <person name="Kachouri R."/>
            <person name="Kerrest A."/>
            <person name="Koszul R."/>
            <person name="Lemaire M."/>
            <person name="Lesur I."/>
            <person name="Ma L."/>
            <person name="Muller H."/>
            <person name="Nicaud J.-M."/>
            <person name="Nikolski M."/>
            <person name="Oztas S."/>
            <person name="Ozier-Kalogeropoulos O."/>
            <person name="Pellenz S."/>
            <person name="Potier S."/>
            <person name="Richard G.-F."/>
            <person name="Straub M.-L."/>
            <person name="Suleau A."/>
            <person name="Swennen D."/>
            <person name="Tekaia F."/>
            <person name="Wesolowski-Louvel M."/>
            <person name="Westhof E."/>
            <person name="Wirth B."/>
            <person name="Zeniou-Meyer M."/>
            <person name="Zivanovic Y."/>
            <person name="Bolotin-Fukuhara M."/>
            <person name="Thierry A."/>
            <person name="Bouchier C."/>
            <person name="Caudron B."/>
            <person name="Scarpelli C."/>
            <person name="Gaillardin C."/>
            <person name="Weissenbach J."/>
            <person name="Wincker P."/>
            <person name="Souciet J.-L."/>
        </authorList>
    </citation>
    <scope>NUCLEOTIDE SEQUENCE [LARGE SCALE GENOMIC DNA]</scope>
    <source>
        <strain>ATCC 2001 / BCRC 20586 / JCM 3761 / NBRC 0622 / NRRL Y-65 / CBS 138</strain>
    </source>
</reference>
<proteinExistence type="inferred from homology"/>
<name>SNX4_CANGA</name>